<gene>
    <name type="primary">napG</name>
    <name type="ordered locus">SF2289</name>
    <name type="ordered locus">S2419</name>
</gene>
<protein>
    <recommendedName>
        <fullName evidence="1">Ferredoxin-type protein NapG</fullName>
    </recommendedName>
</protein>
<comment type="function">
    <text evidence="1">Required for electron transfer from ubiquinol, via NapC, to the periplasmic nitrate reductase NapAB complex.</text>
</comment>
<comment type="cofactor">
    <cofactor evidence="3">
        <name>[4Fe-4S] cluster</name>
        <dbReference type="ChEBI" id="CHEBI:49883"/>
    </cofactor>
    <text evidence="3">Binds 4 [4Fe-4S] cluster.</text>
</comment>
<comment type="subcellular location">
    <subcellularLocation>
        <location evidence="1">Periplasm</location>
    </subcellularLocation>
</comment>
<comment type="PTM">
    <text evidence="2">Predicted to be exported by the Tat system. The position of the signal peptide cleavage has not been experimentally proven.</text>
</comment>
<organism>
    <name type="scientific">Shigella flexneri</name>
    <dbReference type="NCBI Taxonomy" id="623"/>
    <lineage>
        <taxon>Bacteria</taxon>
        <taxon>Pseudomonadati</taxon>
        <taxon>Pseudomonadota</taxon>
        <taxon>Gammaproteobacteria</taxon>
        <taxon>Enterobacterales</taxon>
        <taxon>Enterobacteriaceae</taxon>
        <taxon>Shigella</taxon>
    </lineage>
</organism>
<dbReference type="EMBL" id="AE005674">
    <property type="protein sequence ID" value="AAN43808.1"/>
    <property type="molecule type" value="Genomic_DNA"/>
</dbReference>
<dbReference type="EMBL" id="AE014073">
    <property type="protein sequence ID" value="AAP17625.1"/>
    <property type="molecule type" value="Genomic_DNA"/>
</dbReference>
<dbReference type="RefSeq" id="NP_708101.1">
    <property type="nucleotide sequence ID" value="NC_004337.2"/>
</dbReference>
<dbReference type="RefSeq" id="WP_000091291.1">
    <property type="nucleotide sequence ID" value="NZ_WPGW01000022.1"/>
</dbReference>
<dbReference type="STRING" id="198214.SF2289"/>
<dbReference type="PaxDb" id="198214-SF2289"/>
<dbReference type="GeneID" id="1027262"/>
<dbReference type="GeneID" id="93774973"/>
<dbReference type="KEGG" id="sfl:SF2289"/>
<dbReference type="KEGG" id="sfx:S2419"/>
<dbReference type="PATRIC" id="fig|198214.7.peg.2740"/>
<dbReference type="HOGENOM" id="CLU_077329_0_0_6"/>
<dbReference type="Proteomes" id="UP000001006">
    <property type="component" value="Chromosome"/>
</dbReference>
<dbReference type="Proteomes" id="UP000002673">
    <property type="component" value="Chromosome"/>
</dbReference>
<dbReference type="GO" id="GO:0042597">
    <property type="term" value="C:periplasmic space"/>
    <property type="evidence" value="ECO:0007669"/>
    <property type="project" value="UniProtKB-SubCell"/>
</dbReference>
<dbReference type="GO" id="GO:0051539">
    <property type="term" value="F:4 iron, 4 sulfur cluster binding"/>
    <property type="evidence" value="ECO:0007669"/>
    <property type="project" value="UniProtKB-KW"/>
</dbReference>
<dbReference type="GO" id="GO:0046872">
    <property type="term" value="F:metal ion binding"/>
    <property type="evidence" value="ECO:0007669"/>
    <property type="project" value="UniProtKB-KW"/>
</dbReference>
<dbReference type="CDD" id="cd16373">
    <property type="entry name" value="DMSOR_beta_like"/>
    <property type="match status" value="1"/>
</dbReference>
<dbReference type="FunFam" id="3.30.70.20:FF:000019">
    <property type="entry name" value="Ferredoxin-type protein NapG"/>
    <property type="match status" value="1"/>
</dbReference>
<dbReference type="FunFam" id="3.30.70.20:FF:000021">
    <property type="entry name" value="MauM/NapG family ferredoxin-type protein"/>
    <property type="match status" value="1"/>
</dbReference>
<dbReference type="Gene3D" id="3.30.70.20">
    <property type="match status" value="2"/>
</dbReference>
<dbReference type="InterPro" id="IPR017896">
    <property type="entry name" value="4Fe4S_Fe-S-bd"/>
</dbReference>
<dbReference type="InterPro" id="IPR017900">
    <property type="entry name" value="4Fe4S_Fe_S_CS"/>
</dbReference>
<dbReference type="InterPro" id="IPR004494">
    <property type="entry name" value="MauM_NapG"/>
</dbReference>
<dbReference type="InterPro" id="IPR050294">
    <property type="entry name" value="RnfB_subfamily"/>
</dbReference>
<dbReference type="InterPro" id="IPR006311">
    <property type="entry name" value="TAT_signal"/>
</dbReference>
<dbReference type="NCBIfam" id="TIGR00397">
    <property type="entry name" value="mauM_napG"/>
    <property type="match status" value="1"/>
</dbReference>
<dbReference type="NCBIfam" id="NF007012">
    <property type="entry name" value="PRK09476.1"/>
    <property type="match status" value="1"/>
</dbReference>
<dbReference type="PANTHER" id="PTHR42859:SF10">
    <property type="entry name" value="DIMETHYLSULFOXIDE REDUCTASE CHAIN B"/>
    <property type="match status" value="1"/>
</dbReference>
<dbReference type="PANTHER" id="PTHR42859">
    <property type="entry name" value="OXIDOREDUCTASE"/>
    <property type="match status" value="1"/>
</dbReference>
<dbReference type="Pfam" id="PF12800">
    <property type="entry name" value="Fer4_4"/>
    <property type="match status" value="1"/>
</dbReference>
<dbReference type="Pfam" id="PF12838">
    <property type="entry name" value="Fer4_7"/>
    <property type="match status" value="1"/>
</dbReference>
<dbReference type="SUPFAM" id="SSF54862">
    <property type="entry name" value="4Fe-4S ferredoxins"/>
    <property type="match status" value="1"/>
</dbReference>
<dbReference type="PROSITE" id="PS00198">
    <property type="entry name" value="4FE4S_FER_1"/>
    <property type="match status" value="1"/>
</dbReference>
<dbReference type="PROSITE" id="PS51379">
    <property type="entry name" value="4FE4S_FER_2"/>
    <property type="match status" value="4"/>
</dbReference>
<dbReference type="PROSITE" id="PS51318">
    <property type="entry name" value="TAT"/>
    <property type="match status" value="1"/>
</dbReference>
<sequence length="231" mass="24925">MSRSAKPQNGRRRFLRDVVRTAGGLAAVGVALGLQQQTARASGVRLRPPGAINENAFASACVRCGQCVQACPYDTLKLATLASGLSAGTPYFVARDIPCEMCEDIPCAKVCPSGALDREIESIDDARMGLAVLVDQENCLNFQGLRCDVCYRECPKIDEAITLELERNTRTGKHARFLPTVHSDACTGCGKCEKVCVLEQPAIKVLPLSLAKGELGHHYRFGWLEGNNGKS</sequence>
<keyword id="KW-0004">4Fe-4S</keyword>
<keyword id="KW-0249">Electron transport</keyword>
<keyword id="KW-0408">Iron</keyword>
<keyword id="KW-0411">Iron-sulfur</keyword>
<keyword id="KW-0479">Metal-binding</keyword>
<keyword id="KW-0574">Periplasm</keyword>
<keyword id="KW-1185">Reference proteome</keyword>
<keyword id="KW-0677">Repeat</keyword>
<keyword id="KW-0732">Signal</keyword>
<keyword id="KW-0813">Transport</keyword>
<evidence type="ECO:0000250" key="1">
    <source>
        <dbReference type="UniProtKB" id="P0AAL3"/>
    </source>
</evidence>
<evidence type="ECO:0000255" key="2">
    <source>
        <dbReference type="PROSITE-ProRule" id="PRU00648"/>
    </source>
</evidence>
<evidence type="ECO:0000255" key="3">
    <source>
        <dbReference type="PROSITE-ProRule" id="PRU00711"/>
    </source>
</evidence>
<feature type="signal peptide" description="Tat-type signal" evidence="2">
    <location>
        <begin position="1"/>
        <end position="41"/>
    </location>
</feature>
<feature type="chain" id="PRO_0000159281" description="Ferredoxin-type protein NapG">
    <location>
        <begin position="42"/>
        <end position="231"/>
    </location>
</feature>
<feature type="domain" description="4Fe-4S ferredoxin-type 1" evidence="3">
    <location>
        <begin position="50"/>
        <end position="81"/>
    </location>
</feature>
<feature type="domain" description="4Fe-4S ferredoxin-type 2" evidence="3">
    <location>
        <begin position="89"/>
        <end position="121"/>
    </location>
</feature>
<feature type="domain" description="4Fe-4S ferredoxin-type 3" evidence="3">
    <location>
        <begin position="130"/>
        <end position="166"/>
    </location>
</feature>
<feature type="domain" description="4Fe-4S ferredoxin-type 4" evidence="3">
    <location>
        <begin position="177"/>
        <end position="208"/>
    </location>
</feature>
<feature type="binding site" evidence="3">
    <location>
        <position position="61"/>
    </location>
    <ligand>
        <name>[4Fe-4S] cluster</name>
        <dbReference type="ChEBI" id="CHEBI:49883"/>
        <label>1</label>
    </ligand>
</feature>
<feature type="binding site" evidence="3">
    <location>
        <position position="64"/>
    </location>
    <ligand>
        <name>[4Fe-4S] cluster</name>
        <dbReference type="ChEBI" id="CHEBI:49883"/>
        <label>1</label>
    </ligand>
</feature>
<feature type="binding site" evidence="3">
    <location>
        <position position="67"/>
    </location>
    <ligand>
        <name>[4Fe-4S] cluster</name>
        <dbReference type="ChEBI" id="CHEBI:49883"/>
        <label>1</label>
    </ligand>
</feature>
<feature type="binding site" evidence="3">
    <location>
        <position position="71"/>
    </location>
    <ligand>
        <name>[4Fe-4S] cluster</name>
        <dbReference type="ChEBI" id="CHEBI:49883"/>
        <label>1</label>
    </ligand>
</feature>
<feature type="binding site" evidence="3">
    <location>
        <position position="99"/>
    </location>
    <ligand>
        <name>[4Fe-4S] cluster</name>
        <dbReference type="ChEBI" id="CHEBI:49883"/>
        <label>2</label>
    </ligand>
</feature>
<feature type="binding site" evidence="3">
    <location>
        <position position="102"/>
    </location>
    <ligand>
        <name>[4Fe-4S] cluster</name>
        <dbReference type="ChEBI" id="CHEBI:49883"/>
        <label>2</label>
    </ligand>
</feature>
<feature type="binding site" evidence="3">
    <location>
        <position position="107"/>
    </location>
    <ligand>
        <name>[4Fe-4S] cluster</name>
        <dbReference type="ChEBI" id="CHEBI:49883"/>
        <label>2</label>
    </ligand>
</feature>
<feature type="binding site" evidence="3">
    <location>
        <position position="111"/>
    </location>
    <ligand>
        <name>[4Fe-4S] cluster</name>
        <dbReference type="ChEBI" id="CHEBI:49883"/>
        <label>2</label>
    </ligand>
</feature>
<feature type="binding site" evidence="3">
    <location>
        <position position="139"/>
    </location>
    <ligand>
        <name>[4Fe-4S] cluster</name>
        <dbReference type="ChEBI" id="CHEBI:49883"/>
        <label>3</label>
    </ligand>
</feature>
<feature type="binding site" evidence="3">
    <location>
        <position position="147"/>
    </location>
    <ligand>
        <name>[4Fe-4S] cluster</name>
        <dbReference type="ChEBI" id="CHEBI:49883"/>
        <label>3</label>
    </ligand>
</feature>
<feature type="binding site" evidence="3">
    <location>
        <position position="150"/>
    </location>
    <ligand>
        <name>[4Fe-4S] cluster</name>
        <dbReference type="ChEBI" id="CHEBI:49883"/>
        <label>3</label>
    </ligand>
</feature>
<feature type="binding site" evidence="3">
    <location>
        <position position="154"/>
    </location>
    <ligand>
        <name>[4Fe-4S] cluster</name>
        <dbReference type="ChEBI" id="CHEBI:49883"/>
        <label>3</label>
    </ligand>
</feature>
<feature type="binding site" evidence="3">
    <location>
        <position position="186"/>
    </location>
    <ligand>
        <name>[4Fe-4S] cluster</name>
        <dbReference type="ChEBI" id="CHEBI:49883"/>
        <label>4</label>
    </ligand>
</feature>
<feature type="binding site" evidence="3">
    <location>
        <position position="189"/>
    </location>
    <ligand>
        <name>[4Fe-4S] cluster</name>
        <dbReference type="ChEBI" id="CHEBI:49883"/>
        <label>4</label>
    </ligand>
</feature>
<feature type="binding site" evidence="3">
    <location>
        <position position="192"/>
    </location>
    <ligand>
        <name>[4Fe-4S] cluster</name>
        <dbReference type="ChEBI" id="CHEBI:49883"/>
        <label>4</label>
    </ligand>
</feature>
<feature type="binding site" evidence="3">
    <location>
        <position position="196"/>
    </location>
    <ligand>
        <name>[4Fe-4S] cluster</name>
        <dbReference type="ChEBI" id="CHEBI:49883"/>
        <label>4</label>
    </ligand>
</feature>
<name>NAPG_SHIFL</name>
<proteinExistence type="inferred from homology"/>
<accession>P0AAL5</accession>
<accession>P33935</accession>
<accession>P33936</accession>
<reference key="1">
    <citation type="journal article" date="2002" name="Nucleic Acids Res.">
        <title>Genome sequence of Shigella flexneri 2a: insights into pathogenicity through comparison with genomes of Escherichia coli K12 and O157.</title>
        <authorList>
            <person name="Jin Q."/>
            <person name="Yuan Z."/>
            <person name="Xu J."/>
            <person name="Wang Y."/>
            <person name="Shen Y."/>
            <person name="Lu W."/>
            <person name="Wang J."/>
            <person name="Liu H."/>
            <person name="Yang J."/>
            <person name="Yang F."/>
            <person name="Zhang X."/>
            <person name="Zhang J."/>
            <person name="Yang G."/>
            <person name="Wu H."/>
            <person name="Qu D."/>
            <person name="Dong J."/>
            <person name="Sun L."/>
            <person name="Xue Y."/>
            <person name="Zhao A."/>
            <person name="Gao Y."/>
            <person name="Zhu J."/>
            <person name="Kan B."/>
            <person name="Ding K."/>
            <person name="Chen S."/>
            <person name="Cheng H."/>
            <person name="Yao Z."/>
            <person name="He B."/>
            <person name="Chen R."/>
            <person name="Ma D."/>
            <person name="Qiang B."/>
            <person name="Wen Y."/>
            <person name="Hou Y."/>
            <person name="Yu J."/>
        </authorList>
    </citation>
    <scope>NUCLEOTIDE SEQUENCE [LARGE SCALE GENOMIC DNA]</scope>
    <source>
        <strain>301 / Serotype 2a</strain>
    </source>
</reference>
<reference key="2">
    <citation type="journal article" date="2003" name="Infect. Immun.">
        <title>Complete genome sequence and comparative genomics of Shigella flexneri serotype 2a strain 2457T.</title>
        <authorList>
            <person name="Wei J."/>
            <person name="Goldberg M.B."/>
            <person name="Burland V."/>
            <person name="Venkatesan M.M."/>
            <person name="Deng W."/>
            <person name="Fournier G."/>
            <person name="Mayhew G.F."/>
            <person name="Plunkett G. III"/>
            <person name="Rose D.J."/>
            <person name="Darling A."/>
            <person name="Mau B."/>
            <person name="Perna N.T."/>
            <person name="Payne S.M."/>
            <person name="Runyen-Janecky L.J."/>
            <person name="Zhou S."/>
            <person name="Schwartz D.C."/>
            <person name="Blattner F.R."/>
        </authorList>
    </citation>
    <scope>NUCLEOTIDE SEQUENCE [LARGE SCALE GENOMIC DNA]</scope>
    <source>
        <strain>ATCC 700930 / 2457T / Serotype 2a</strain>
    </source>
</reference>